<keyword id="KW-0004">4Fe-4S</keyword>
<keyword id="KW-0067">ATP-binding</keyword>
<keyword id="KW-0963">Cytoplasm</keyword>
<keyword id="KW-0408">Iron</keyword>
<keyword id="KW-0411">Iron-sulfur</keyword>
<keyword id="KW-0460">Magnesium</keyword>
<keyword id="KW-0479">Metal-binding</keyword>
<keyword id="KW-0547">Nucleotide-binding</keyword>
<keyword id="KW-1185">Reference proteome</keyword>
<keyword id="KW-0694">RNA-binding</keyword>
<keyword id="KW-0808">Transferase</keyword>
<keyword id="KW-0819">tRNA processing</keyword>
<keyword id="KW-0820">tRNA-binding</keyword>
<feature type="chain" id="PRO_0000348684" description="tRNA-cytidine(32) 2-sulfurtransferase">
    <location>
        <begin position="1"/>
        <end position="331"/>
    </location>
</feature>
<feature type="short sequence motif" description="PP-loop motif" evidence="1">
    <location>
        <begin position="73"/>
        <end position="78"/>
    </location>
</feature>
<feature type="binding site" evidence="1">
    <location>
        <position position="148"/>
    </location>
    <ligand>
        <name>[4Fe-4S] cluster</name>
        <dbReference type="ChEBI" id="CHEBI:49883"/>
    </ligand>
</feature>
<feature type="binding site" evidence="1">
    <location>
        <position position="151"/>
    </location>
    <ligand>
        <name>[4Fe-4S] cluster</name>
        <dbReference type="ChEBI" id="CHEBI:49883"/>
    </ligand>
</feature>
<feature type="binding site" evidence="1">
    <location>
        <position position="239"/>
    </location>
    <ligand>
        <name>[4Fe-4S] cluster</name>
        <dbReference type="ChEBI" id="CHEBI:49883"/>
    </ligand>
</feature>
<protein>
    <recommendedName>
        <fullName evidence="1">tRNA-cytidine(32) 2-sulfurtransferase</fullName>
        <ecNumber evidence="1">2.8.1.-</ecNumber>
    </recommendedName>
    <alternativeName>
        <fullName evidence="1">Two-thiocytidine biosynthesis protein A</fullName>
    </alternativeName>
    <alternativeName>
        <fullName evidence="1">tRNA 2-thiocytidine biosynthesis protein TtcA</fullName>
    </alternativeName>
</protein>
<gene>
    <name evidence="1" type="primary">ttcA</name>
    <name type="ordered locus">BMA3381</name>
</gene>
<dbReference type="EC" id="2.8.1.-" evidence="1"/>
<dbReference type="EMBL" id="CP000010">
    <property type="protein sequence ID" value="AAU48620.1"/>
    <property type="molecule type" value="Genomic_DNA"/>
</dbReference>
<dbReference type="RefSeq" id="WP_004189298.1">
    <property type="nucleotide sequence ID" value="NC_006348.1"/>
</dbReference>
<dbReference type="RefSeq" id="YP_104839.1">
    <property type="nucleotide sequence ID" value="NC_006348.1"/>
</dbReference>
<dbReference type="SMR" id="Q62EN9"/>
<dbReference type="GeneID" id="93058831"/>
<dbReference type="KEGG" id="bma:BMA3381"/>
<dbReference type="PATRIC" id="fig|243160.12.peg.3469"/>
<dbReference type="eggNOG" id="COG0037">
    <property type="taxonomic scope" value="Bacteria"/>
</dbReference>
<dbReference type="HOGENOM" id="CLU_026481_0_0_4"/>
<dbReference type="Proteomes" id="UP000006693">
    <property type="component" value="Chromosome 1"/>
</dbReference>
<dbReference type="GO" id="GO:0005737">
    <property type="term" value="C:cytoplasm"/>
    <property type="evidence" value="ECO:0007669"/>
    <property type="project" value="UniProtKB-SubCell"/>
</dbReference>
<dbReference type="GO" id="GO:0051539">
    <property type="term" value="F:4 iron, 4 sulfur cluster binding"/>
    <property type="evidence" value="ECO:0007669"/>
    <property type="project" value="UniProtKB-UniRule"/>
</dbReference>
<dbReference type="GO" id="GO:0005524">
    <property type="term" value="F:ATP binding"/>
    <property type="evidence" value="ECO:0007669"/>
    <property type="project" value="UniProtKB-UniRule"/>
</dbReference>
<dbReference type="GO" id="GO:0000287">
    <property type="term" value="F:magnesium ion binding"/>
    <property type="evidence" value="ECO:0007669"/>
    <property type="project" value="UniProtKB-UniRule"/>
</dbReference>
<dbReference type="GO" id="GO:0016783">
    <property type="term" value="F:sulfurtransferase activity"/>
    <property type="evidence" value="ECO:0007669"/>
    <property type="project" value="UniProtKB-UniRule"/>
</dbReference>
<dbReference type="GO" id="GO:0000049">
    <property type="term" value="F:tRNA binding"/>
    <property type="evidence" value="ECO:0007669"/>
    <property type="project" value="UniProtKB-KW"/>
</dbReference>
<dbReference type="GO" id="GO:0034227">
    <property type="term" value="P:tRNA thio-modification"/>
    <property type="evidence" value="ECO:0007669"/>
    <property type="project" value="UniProtKB-UniRule"/>
</dbReference>
<dbReference type="CDD" id="cd24138">
    <property type="entry name" value="TtcA-like"/>
    <property type="match status" value="1"/>
</dbReference>
<dbReference type="Gene3D" id="3.40.50.620">
    <property type="entry name" value="HUPs"/>
    <property type="match status" value="1"/>
</dbReference>
<dbReference type="HAMAP" id="MF_01850">
    <property type="entry name" value="TtcA"/>
    <property type="match status" value="1"/>
</dbReference>
<dbReference type="InterPro" id="IPR014729">
    <property type="entry name" value="Rossmann-like_a/b/a_fold"/>
</dbReference>
<dbReference type="InterPro" id="IPR011063">
    <property type="entry name" value="TilS/TtcA_N"/>
</dbReference>
<dbReference type="InterPro" id="IPR012089">
    <property type="entry name" value="tRNA_Cyd_32_2_STrfase"/>
</dbReference>
<dbReference type="NCBIfam" id="NF007972">
    <property type="entry name" value="PRK10696.1"/>
    <property type="match status" value="1"/>
</dbReference>
<dbReference type="PANTHER" id="PTHR43686:SF1">
    <property type="entry name" value="AMINOTRAN_5 DOMAIN-CONTAINING PROTEIN"/>
    <property type="match status" value="1"/>
</dbReference>
<dbReference type="PANTHER" id="PTHR43686">
    <property type="entry name" value="SULFURTRANSFERASE-RELATED"/>
    <property type="match status" value="1"/>
</dbReference>
<dbReference type="Pfam" id="PF01171">
    <property type="entry name" value="ATP_bind_3"/>
    <property type="match status" value="1"/>
</dbReference>
<dbReference type="SUPFAM" id="SSF52402">
    <property type="entry name" value="Adenine nucleotide alpha hydrolases-like"/>
    <property type="match status" value="1"/>
</dbReference>
<name>TTCA_BURMA</name>
<reference key="1">
    <citation type="journal article" date="2004" name="Proc. Natl. Acad. Sci. U.S.A.">
        <title>Structural flexibility in the Burkholderia mallei genome.</title>
        <authorList>
            <person name="Nierman W.C."/>
            <person name="DeShazer D."/>
            <person name="Kim H.S."/>
            <person name="Tettelin H."/>
            <person name="Nelson K.E."/>
            <person name="Feldblyum T.V."/>
            <person name="Ulrich R.L."/>
            <person name="Ronning C.M."/>
            <person name="Brinkac L.M."/>
            <person name="Daugherty S.C."/>
            <person name="Davidsen T.D."/>
            <person name="DeBoy R.T."/>
            <person name="Dimitrov G."/>
            <person name="Dodson R.J."/>
            <person name="Durkin A.S."/>
            <person name="Gwinn M.L."/>
            <person name="Haft D.H."/>
            <person name="Khouri H.M."/>
            <person name="Kolonay J.F."/>
            <person name="Madupu R."/>
            <person name="Mohammoud Y."/>
            <person name="Nelson W.C."/>
            <person name="Radune D."/>
            <person name="Romero C.M."/>
            <person name="Sarria S."/>
            <person name="Selengut J."/>
            <person name="Shamblin C."/>
            <person name="Sullivan S.A."/>
            <person name="White O."/>
            <person name="Yu Y."/>
            <person name="Zafar N."/>
            <person name="Zhou L."/>
            <person name="Fraser C.M."/>
        </authorList>
    </citation>
    <scope>NUCLEOTIDE SEQUENCE [LARGE SCALE GENOMIC DNA]</scope>
    <source>
        <strain>ATCC 23344</strain>
    </source>
</reference>
<accession>Q62EN9</accession>
<proteinExistence type="inferred from homology"/>
<comment type="function">
    <text evidence="1">Catalyzes the ATP-dependent 2-thiolation of cytidine in position 32 of tRNA, to form 2-thiocytidine (s(2)C32). The sulfur atoms are provided by the cysteine/cysteine desulfurase (IscS) system.</text>
</comment>
<comment type="catalytic activity">
    <reaction evidence="1">
        <text>cytidine(32) in tRNA + S-sulfanyl-L-cysteinyl-[cysteine desulfurase] + AH2 + ATP = 2-thiocytidine(32) in tRNA + L-cysteinyl-[cysteine desulfurase] + A + AMP + diphosphate + H(+)</text>
        <dbReference type="Rhea" id="RHEA:57048"/>
        <dbReference type="Rhea" id="RHEA-COMP:10288"/>
        <dbReference type="Rhea" id="RHEA-COMP:12157"/>
        <dbReference type="Rhea" id="RHEA-COMP:12158"/>
        <dbReference type="Rhea" id="RHEA-COMP:14821"/>
        <dbReference type="ChEBI" id="CHEBI:13193"/>
        <dbReference type="ChEBI" id="CHEBI:15378"/>
        <dbReference type="ChEBI" id="CHEBI:17499"/>
        <dbReference type="ChEBI" id="CHEBI:29950"/>
        <dbReference type="ChEBI" id="CHEBI:30616"/>
        <dbReference type="ChEBI" id="CHEBI:33019"/>
        <dbReference type="ChEBI" id="CHEBI:61963"/>
        <dbReference type="ChEBI" id="CHEBI:82748"/>
        <dbReference type="ChEBI" id="CHEBI:141453"/>
        <dbReference type="ChEBI" id="CHEBI:456215"/>
    </reaction>
    <physiologicalReaction direction="left-to-right" evidence="1">
        <dbReference type="Rhea" id="RHEA:57049"/>
    </physiologicalReaction>
</comment>
<comment type="cofactor">
    <cofactor evidence="1">
        <name>Mg(2+)</name>
        <dbReference type="ChEBI" id="CHEBI:18420"/>
    </cofactor>
</comment>
<comment type="cofactor">
    <cofactor evidence="1">
        <name>[4Fe-4S] cluster</name>
        <dbReference type="ChEBI" id="CHEBI:49883"/>
    </cofactor>
    <text evidence="1">Binds 1 [4Fe-4S] cluster per subunit. The cluster is chelated by three Cys residues, the fourth Fe has a free coordination site that may bind a sulfur atom transferred from the persulfide of IscS.</text>
</comment>
<comment type="pathway">
    <text evidence="1">tRNA modification.</text>
</comment>
<comment type="subunit">
    <text evidence="1">Homodimer.</text>
</comment>
<comment type="subcellular location">
    <subcellularLocation>
        <location evidence="1">Cytoplasm</location>
    </subcellularLocation>
</comment>
<comment type="miscellaneous">
    <text evidence="1">The thiolation reaction likely consists of two steps: a first activation step by ATP to form an adenylated intermediate of the target base of tRNA, and a second nucleophilic substitution step of the sulfur (S) atom supplied by the hydrosulfide attached to the Fe-S cluster.</text>
</comment>
<comment type="similarity">
    <text evidence="1">Belongs to the TtcA family.</text>
</comment>
<sequence>MNAPHTPHLNEAEAAAAVEANAAELGRRALTRREQKEAYENNKLFKRLVRQVGQAIGDYNMIEHGDKVMVCLSGGKDSYALLDILLRLRERAPIDFDIVAVNLDQKQPGFPEHVLPEYLTKIGVPFHIENQDTYSIVKRLVPEGKTTCSLCSRLRRGILYRVAGELGATKIALGHHRDDIVQTLLLNMFYGGKLKGMPPKLQSDDGKNIVIRPLAYAKETDLEKYAELREFPIIPCNLCGSQPNLKRAEMKALIRDWDKRFPGRVDNMFNALANVVPSHLMDARLFPFAGLRATGEADPNGDIAFDEDPCGTDASAPGGAKSVSIVQFDDL</sequence>
<evidence type="ECO:0000255" key="1">
    <source>
        <dbReference type="HAMAP-Rule" id="MF_01850"/>
    </source>
</evidence>
<organism>
    <name type="scientific">Burkholderia mallei (strain ATCC 23344)</name>
    <dbReference type="NCBI Taxonomy" id="243160"/>
    <lineage>
        <taxon>Bacteria</taxon>
        <taxon>Pseudomonadati</taxon>
        <taxon>Pseudomonadota</taxon>
        <taxon>Betaproteobacteria</taxon>
        <taxon>Burkholderiales</taxon>
        <taxon>Burkholderiaceae</taxon>
        <taxon>Burkholderia</taxon>
        <taxon>pseudomallei group</taxon>
    </lineage>
</organism>